<sequence>MFESIIVDRAKTTFLGELKSYNFSIYAQWLGILSIFLCIILGIVNLFHVTLVVLFSALTIIEGVLLIFIELPFLSRICPVSDKFQAFTNAFASNYYRGLVYFIFSVVTFLSCIFMATSLIATGIVLALTGLCYTFAGIKGQAFTSSSTLGGTGITTETPPSTMV</sequence>
<evidence type="ECO:0000250" key="1"/>
<evidence type="ECO:0000255" key="2"/>
<evidence type="ECO:0000269" key="3">
    <source>
    </source>
</evidence>
<evidence type="ECO:0000305" key="4"/>
<reference key="1">
    <citation type="journal article" date="2002" name="Nature">
        <title>The genome sequence of Schizosaccharomyces pombe.</title>
        <authorList>
            <person name="Wood V."/>
            <person name="Gwilliam R."/>
            <person name="Rajandream M.A."/>
            <person name="Lyne M.H."/>
            <person name="Lyne R."/>
            <person name="Stewart A."/>
            <person name="Sgouros J.G."/>
            <person name="Peat N."/>
            <person name="Hayles J."/>
            <person name="Baker S.G."/>
            <person name="Basham D."/>
            <person name="Bowman S."/>
            <person name="Brooks K."/>
            <person name="Brown D."/>
            <person name="Brown S."/>
            <person name="Chillingworth T."/>
            <person name="Churcher C.M."/>
            <person name="Collins M."/>
            <person name="Connor R."/>
            <person name="Cronin A."/>
            <person name="Davis P."/>
            <person name="Feltwell T."/>
            <person name="Fraser A."/>
            <person name="Gentles S."/>
            <person name="Goble A."/>
            <person name="Hamlin N."/>
            <person name="Harris D.E."/>
            <person name="Hidalgo J."/>
            <person name="Hodgson G."/>
            <person name="Holroyd S."/>
            <person name="Hornsby T."/>
            <person name="Howarth S."/>
            <person name="Huckle E.J."/>
            <person name="Hunt S."/>
            <person name="Jagels K."/>
            <person name="James K.D."/>
            <person name="Jones L."/>
            <person name="Jones M."/>
            <person name="Leather S."/>
            <person name="McDonald S."/>
            <person name="McLean J."/>
            <person name="Mooney P."/>
            <person name="Moule S."/>
            <person name="Mungall K.L."/>
            <person name="Murphy L.D."/>
            <person name="Niblett D."/>
            <person name="Odell C."/>
            <person name="Oliver K."/>
            <person name="O'Neil S."/>
            <person name="Pearson D."/>
            <person name="Quail M.A."/>
            <person name="Rabbinowitsch E."/>
            <person name="Rutherford K.M."/>
            <person name="Rutter S."/>
            <person name="Saunders D."/>
            <person name="Seeger K."/>
            <person name="Sharp S."/>
            <person name="Skelton J."/>
            <person name="Simmonds M.N."/>
            <person name="Squares R."/>
            <person name="Squares S."/>
            <person name="Stevens K."/>
            <person name="Taylor K."/>
            <person name="Taylor R.G."/>
            <person name="Tivey A."/>
            <person name="Walsh S.V."/>
            <person name="Warren T."/>
            <person name="Whitehead S."/>
            <person name="Woodward J.R."/>
            <person name="Volckaert G."/>
            <person name="Aert R."/>
            <person name="Robben J."/>
            <person name="Grymonprez B."/>
            <person name="Weltjens I."/>
            <person name="Vanstreels E."/>
            <person name="Rieger M."/>
            <person name="Schaefer M."/>
            <person name="Mueller-Auer S."/>
            <person name="Gabel C."/>
            <person name="Fuchs M."/>
            <person name="Duesterhoeft A."/>
            <person name="Fritzc C."/>
            <person name="Holzer E."/>
            <person name="Moestl D."/>
            <person name="Hilbert H."/>
            <person name="Borzym K."/>
            <person name="Langer I."/>
            <person name="Beck A."/>
            <person name="Lehrach H."/>
            <person name="Reinhardt R."/>
            <person name="Pohl T.M."/>
            <person name="Eger P."/>
            <person name="Zimmermann W."/>
            <person name="Wedler H."/>
            <person name="Wambutt R."/>
            <person name="Purnelle B."/>
            <person name="Goffeau A."/>
            <person name="Cadieu E."/>
            <person name="Dreano S."/>
            <person name="Gloux S."/>
            <person name="Lelaure V."/>
            <person name="Mottier S."/>
            <person name="Galibert F."/>
            <person name="Aves S.J."/>
            <person name="Xiang Z."/>
            <person name="Hunt C."/>
            <person name="Moore K."/>
            <person name="Hurst S.M."/>
            <person name="Lucas M."/>
            <person name="Rochet M."/>
            <person name="Gaillardin C."/>
            <person name="Tallada V.A."/>
            <person name="Garzon A."/>
            <person name="Thode G."/>
            <person name="Daga R.R."/>
            <person name="Cruzado L."/>
            <person name="Jimenez J."/>
            <person name="Sanchez M."/>
            <person name="del Rey F."/>
            <person name="Benito J."/>
            <person name="Dominguez A."/>
            <person name="Revuelta J.L."/>
            <person name="Moreno S."/>
            <person name="Armstrong J."/>
            <person name="Forsburg S.L."/>
            <person name="Cerutti L."/>
            <person name="Lowe T."/>
            <person name="McCombie W.R."/>
            <person name="Paulsen I."/>
            <person name="Potashkin J."/>
            <person name="Shpakovski G.V."/>
            <person name="Ussery D."/>
            <person name="Barrell B.G."/>
            <person name="Nurse P."/>
        </authorList>
    </citation>
    <scope>NUCLEOTIDE SEQUENCE [LARGE SCALE GENOMIC DNA]</scope>
    <source>
        <strain>972 / ATCC 24843</strain>
    </source>
</reference>
<reference key="2">
    <citation type="journal article" date="2006" name="Nat. Biotechnol.">
        <title>ORFeome cloning and global analysis of protein localization in the fission yeast Schizosaccharomyces pombe.</title>
        <authorList>
            <person name="Matsuyama A."/>
            <person name="Arai R."/>
            <person name="Yashiroda Y."/>
            <person name="Shirai A."/>
            <person name="Kamata A."/>
            <person name="Sekido S."/>
            <person name="Kobayashi Y."/>
            <person name="Hashimoto A."/>
            <person name="Hamamoto M."/>
            <person name="Hiraoka Y."/>
            <person name="Horinouchi S."/>
            <person name="Yoshida M."/>
        </authorList>
    </citation>
    <scope>SUBCELLULAR LOCATION [LARGE SCALE ANALYSIS]</scope>
</reference>
<protein>
    <recommendedName>
        <fullName>Golgi apparatus membrane protein tvp18</fullName>
    </recommendedName>
</protein>
<keyword id="KW-0325">Glycoprotein</keyword>
<keyword id="KW-0333">Golgi apparatus</keyword>
<keyword id="KW-0472">Membrane</keyword>
<keyword id="KW-1185">Reference proteome</keyword>
<keyword id="KW-0812">Transmembrane</keyword>
<keyword id="KW-1133">Transmembrane helix</keyword>
<organism>
    <name type="scientific">Schizosaccharomyces pombe (strain 972 / ATCC 24843)</name>
    <name type="common">Fission yeast</name>
    <dbReference type="NCBI Taxonomy" id="284812"/>
    <lineage>
        <taxon>Eukaryota</taxon>
        <taxon>Fungi</taxon>
        <taxon>Dikarya</taxon>
        <taxon>Ascomycota</taxon>
        <taxon>Taphrinomycotina</taxon>
        <taxon>Schizosaccharomycetes</taxon>
        <taxon>Schizosaccharomycetales</taxon>
        <taxon>Schizosaccharomycetaceae</taxon>
        <taxon>Schizosaccharomyces</taxon>
    </lineage>
</organism>
<name>TVP18_SCHPO</name>
<proteinExistence type="inferred from homology"/>
<comment type="function">
    <text evidence="1">Golgi membrane protein involved in vesicular trafficking.</text>
</comment>
<comment type="subcellular location">
    <subcellularLocation>
        <location evidence="3">Golgi apparatus membrane</location>
        <topology evidence="3">Multi-pass membrane protein</topology>
    </subcellularLocation>
</comment>
<comment type="similarity">
    <text evidence="4">Belongs to the TVP18 family.</text>
</comment>
<accession>O74375</accession>
<dbReference type="EMBL" id="CU329671">
    <property type="protein sequence ID" value="CAA19373.1"/>
    <property type="molecule type" value="Genomic_DNA"/>
</dbReference>
<dbReference type="PIR" id="T40236">
    <property type="entry name" value="T40236"/>
</dbReference>
<dbReference type="RefSeq" id="NP_596156.1">
    <property type="nucleotide sequence ID" value="NM_001022075.2"/>
</dbReference>
<dbReference type="BioGRID" id="276787">
    <property type="interactions" value="22"/>
</dbReference>
<dbReference type="FunCoup" id="O74375">
    <property type="interactions" value="38"/>
</dbReference>
<dbReference type="STRING" id="284812.O74375"/>
<dbReference type="GlyCosmos" id="O74375">
    <property type="glycosylation" value="1 site, No reported glycans"/>
</dbReference>
<dbReference type="iPTMnet" id="O74375"/>
<dbReference type="PaxDb" id="4896-SPBC32F12.12c.1"/>
<dbReference type="EnsemblFungi" id="SPBC32F12.12c.1">
    <property type="protein sequence ID" value="SPBC32F12.12c.1:pep"/>
    <property type="gene ID" value="SPBC32F12.12c"/>
</dbReference>
<dbReference type="KEGG" id="spo:2540256"/>
<dbReference type="PomBase" id="SPBC32F12.12c"/>
<dbReference type="VEuPathDB" id="FungiDB:SPBC32F12.12c"/>
<dbReference type="eggNOG" id="ENOG502S3AC">
    <property type="taxonomic scope" value="Eukaryota"/>
</dbReference>
<dbReference type="HOGENOM" id="CLU_118698_0_0_1"/>
<dbReference type="InParanoid" id="O74375"/>
<dbReference type="OMA" id="IYAQWLG"/>
<dbReference type="PhylomeDB" id="O74375"/>
<dbReference type="PRO" id="PR:O74375"/>
<dbReference type="Proteomes" id="UP000002485">
    <property type="component" value="Chromosome II"/>
</dbReference>
<dbReference type="GO" id="GO:0005794">
    <property type="term" value="C:Golgi apparatus"/>
    <property type="evidence" value="ECO:0007005"/>
    <property type="project" value="PomBase"/>
</dbReference>
<dbReference type="GO" id="GO:0000139">
    <property type="term" value="C:Golgi membrane"/>
    <property type="evidence" value="ECO:0000318"/>
    <property type="project" value="GO_Central"/>
</dbReference>
<dbReference type="GO" id="GO:0006897">
    <property type="term" value="P:endocytosis"/>
    <property type="evidence" value="ECO:0000266"/>
    <property type="project" value="PomBase"/>
</dbReference>
<dbReference type="GO" id="GO:0016192">
    <property type="term" value="P:vesicle-mediated transport"/>
    <property type="evidence" value="ECO:0000318"/>
    <property type="project" value="GO_Central"/>
</dbReference>
<dbReference type="InterPro" id="IPR019365">
    <property type="entry name" value="TVP18/Ca-channel_flower"/>
</dbReference>
<dbReference type="PANTHER" id="PTHR13314">
    <property type="entry name" value="CALCIUM CHANNEL FLOWER HOMOLOG"/>
    <property type="match status" value="1"/>
</dbReference>
<dbReference type="PANTHER" id="PTHR13314:SF2">
    <property type="entry name" value="CALCIUM CHANNEL FLOWER HOMOLOG"/>
    <property type="match status" value="1"/>
</dbReference>
<dbReference type="Pfam" id="PF10233">
    <property type="entry name" value="Cg6151-P"/>
    <property type="match status" value="1"/>
</dbReference>
<dbReference type="SMART" id="SM01077">
    <property type="entry name" value="Cg6151-P"/>
    <property type="match status" value="1"/>
</dbReference>
<gene>
    <name type="primary">tvp18</name>
    <name type="ORF">SPBC32F12.12c</name>
</gene>
<feature type="chain" id="PRO_0000343030" description="Golgi apparatus membrane protein tvp18">
    <location>
        <begin position="1"/>
        <end position="164"/>
    </location>
</feature>
<feature type="transmembrane region" description="Helical" evidence="2">
    <location>
        <begin position="35"/>
        <end position="55"/>
    </location>
</feature>
<feature type="transmembrane region" description="Helical" evidence="2">
    <location>
        <begin position="57"/>
        <end position="77"/>
    </location>
</feature>
<feature type="transmembrane region" description="Helical" evidence="2">
    <location>
        <begin position="100"/>
        <end position="120"/>
    </location>
</feature>
<feature type="transmembrane region" description="Helical" evidence="2">
    <location>
        <begin position="123"/>
        <end position="143"/>
    </location>
</feature>
<feature type="glycosylation site" description="N-linked (GlcNAc...) asparagine" evidence="2">
    <location>
        <position position="22"/>
    </location>
</feature>